<accession>Q1IFY7</accession>
<dbReference type="EMBL" id="CT573326">
    <property type="protein sequence ID" value="CAK13415.1"/>
    <property type="molecule type" value="Genomic_DNA"/>
</dbReference>
<dbReference type="RefSeq" id="WP_011531872.1">
    <property type="nucleotide sequence ID" value="NC_008027.1"/>
</dbReference>
<dbReference type="SMR" id="Q1IFY7"/>
<dbReference type="STRING" id="384676.PSEEN0461"/>
<dbReference type="GeneID" id="32803795"/>
<dbReference type="KEGG" id="pen:PSEEN0461"/>
<dbReference type="eggNOG" id="COG0316">
    <property type="taxonomic scope" value="Bacteria"/>
</dbReference>
<dbReference type="HOGENOM" id="CLU_069054_5_3_6"/>
<dbReference type="OrthoDB" id="9801228at2"/>
<dbReference type="Proteomes" id="UP000000658">
    <property type="component" value="Chromosome"/>
</dbReference>
<dbReference type="GO" id="GO:0005829">
    <property type="term" value="C:cytosol"/>
    <property type="evidence" value="ECO:0007669"/>
    <property type="project" value="TreeGrafter"/>
</dbReference>
<dbReference type="GO" id="GO:0051537">
    <property type="term" value="F:2 iron, 2 sulfur cluster binding"/>
    <property type="evidence" value="ECO:0007669"/>
    <property type="project" value="UniProtKB-ARBA"/>
</dbReference>
<dbReference type="GO" id="GO:0051539">
    <property type="term" value="F:4 iron, 4 sulfur cluster binding"/>
    <property type="evidence" value="ECO:0007669"/>
    <property type="project" value="TreeGrafter"/>
</dbReference>
<dbReference type="GO" id="GO:0005506">
    <property type="term" value="F:iron ion binding"/>
    <property type="evidence" value="ECO:0007669"/>
    <property type="project" value="UniProtKB-UniRule"/>
</dbReference>
<dbReference type="GO" id="GO:0016226">
    <property type="term" value="P:iron-sulfur cluster assembly"/>
    <property type="evidence" value="ECO:0007669"/>
    <property type="project" value="UniProtKB-UniRule"/>
</dbReference>
<dbReference type="FunFam" id="2.60.300.12:FF:000002">
    <property type="entry name" value="Iron-sulfur cluster insertion protein ErpA"/>
    <property type="match status" value="1"/>
</dbReference>
<dbReference type="Gene3D" id="2.60.300.12">
    <property type="entry name" value="HesB-like domain"/>
    <property type="match status" value="1"/>
</dbReference>
<dbReference type="HAMAP" id="MF_01380">
    <property type="entry name" value="Fe_S_insert_ErpA"/>
    <property type="match status" value="1"/>
</dbReference>
<dbReference type="InterPro" id="IPR000361">
    <property type="entry name" value="FeS_biogenesis"/>
</dbReference>
<dbReference type="InterPro" id="IPR016092">
    <property type="entry name" value="FeS_cluster_insertion"/>
</dbReference>
<dbReference type="InterPro" id="IPR017870">
    <property type="entry name" value="FeS_cluster_insertion_CS"/>
</dbReference>
<dbReference type="InterPro" id="IPR023063">
    <property type="entry name" value="FeS_cluster_insertion_RrpA"/>
</dbReference>
<dbReference type="InterPro" id="IPR035903">
    <property type="entry name" value="HesB-like_dom_sf"/>
</dbReference>
<dbReference type="NCBIfam" id="TIGR00049">
    <property type="entry name" value="iron-sulfur cluster assembly accessory protein"/>
    <property type="match status" value="1"/>
</dbReference>
<dbReference type="NCBIfam" id="NF010147">
    <property type="entry name" value="PRK13623.1"/>
    <property type="match status" value="1"/>
</dbReference>
<dbReference type="PANTHER" id="PTHR43011">
    <property type="entry name" value="IRON-SULFUR CLUSTER ASSEMBLY 2 HOMOLOG, MITOCHONDRIAL"/>
    <property type="match status" value="1"/>
</dbReference>
<dbReference type="PANTHER" id="PTHR43011:SF1">
    <property type="entry name" value="IRON-SULFUR CLUSTER ASSEMBLY 2 HOMOLOG, MITOCHONDRIAL"/>
    <property type="match status" value="1"/>
</dbReference>
<dbReference type="Pfam" id="PF01521">
    <property type="entry name" value="Fe-S_biosyn"/>
    <property type="match status" value="1"/>
</dbReference>
<dbReference type="SUPFAM" id="SSF89360">
    <property type="entry name" value="HesB-like domain"/>
    <property type="match status" value="1"/>
</dbReference>
<dbReference type="PROSITE" id="PS01152">
    <property type="entry name" value="HESB"/>
    <property type="match status" value="1"/>
</dbReference>
<name>ERPA_PSEE4</name>
<proteinExistence type="inferred from homology"/>
<reference key="1">
    <citation type="journal article" date="2006" name="Nat. Biotechnol.">
        <title>Complete genome sequence of the entomopathogenic and metabolically versatile soil bacterium Pseudomonas entomophila.</title>
        <authorList>
            <person name="Vodovar N."/>
            <person name="Vallenet D."/>
            <person name="Cruveiller S."/>
            <person name="Rouy Z."/>
            <person name="Barbe V."/>
            <person name="Acosta C."/>
            <person name="Cattolico L."/>
            <person name="Jubin C."/>
            <person name="Lajus A."/>
            <person name="Segurens B."/>
            <person name="Vacherie B."/>
            <person name="Wincker P."/>
            <person name="Weissenbach J."/>
            <person name="Lemaitre B."/>
            <person name="Medigue C."/>
            <person name="Boccard F."/>
        </authorList>
    </citation>
    <scope>NUCLEOTIDE SEQUENCE [LARGE SCALE GENOMIC DNA]</scope>
    <source>
        <strain>L48</strain>
    </source>
</reference>
<feature type="chain" id="PRO_0000311525" description="Iron-sulfur cluster insertion protein ErpA">
    <location>
        <begin position="1"/>
        <end position="116"/>
    </location>
</feature>
<feature type="binding site" evidence="1">
    <location>
        <position position="44"/>
    </location>
    <ligand>
        <name>iron-sulfur cluster</name>
        <dbReference type="ChEBI" id="CHEBI:30408"/>
    </ligand>
</feature>
<feature type="binding site" evidence="1">
    <location>
        <position position="108"/>
    </location>
    <ligand>
        <name>iron-sulfur cluster</name>
        <dbReference type="ChEBI" id="CHEBI:30408"/>
    </ligand>
</feature>
<feature type="binding site" evidence="1">
    <location>
        <position position="110"/>
    </location>
    <ligand>
        <name>iron-sulfur cluster</name>
        <dbReference type="ChEBI" id="CHEBI:30408"/>
    </ligand>
</feature>
<gene>
    <name evidence="1" type="primary">erpA</name>
    <name type="ordered locus">PSEEN0461</name>
</gene>
<organism>
    <name type="scientific">Pseudomonas entomophila (strain L48)</name>
    <dbReference type="NCBI Taxonomy" id="384676"/>
    <lineage>
        <taxon>Bacteria</taxon>
        <taxon>Pseudomonadati</taxon>
        <taxon>Pseudomonadota</taxon>
        <taxon>Gammaproteobacteria</taxon>
        <taxon>Pseudomonadales</taxon>
        <taxon>Pseudomonadaceae</taxon>
        <taxon>Pseudomonas</taxon>
    </lineage>
</organism>
<sequence>MSVESFTPTALEFTPGAAHKVKTLVSEEGNDRLKLRVFVTGGGCSGFQYGFTFDEDVAEDDTIVEREGVALVVDPMSFQYLAGAEVDYQEGLEGSRFVIKNPNATTTCGCGSSFSI</sequence>
<evidence type="ECO:0000255" key="1">
    <source>
        <dbReference type="HAMAP-Rule" id="MF_01380"/>
    </source>
</evidence>
<comment type="function">
    <text evidence="1">Required for insertion of 4Fe-4S clusters for at least IspG.</text>
</comment>
<comment type="cofactor">
    <cofactor evidence="1">
        <name>iron-sulfur cluster</name>
        <dbReference type="ChEBI" id="CHEBI:30408"/>
    </cofactor>
    <text evidence="1">Binds 1 iron-sulfur cluster per subunit.</text>
</comment>
<comment type="subunit">
    <text evidence="1">Homodimer.</text>
</comment>
<comment type="similarity">
    <text evidence="1">Belongs to the HesB/IscA family.</text>
</comment>
<keyword id="KW-0408">Iron</keyword>
<keyword id="KW-0411">Iron-sulfur</keyword>
<keyword id="KW-0479">Metal-binding</keyword>
<protein>
    <recommendedName>
        <fullName evidence="1">Iron-sulfur cluster insertion protein ErpA</fullName>
    </recommendedName>
</protein>